<reference key="1">
    <citation type="journal article" date="2001" name="Science">
        <title>Comparative genomics of Listeria species.</title>
        <authorList>
            <person name="Glaser P."/>
            <person name="Frangeul L."/>
            <person name="Buchrieser C."/>
            <person name="Rusniok C."/>
            <person name="Amend A."/>
            <person name="Baquero F."/>
            <person name="Berche P."/>
            <person name="Bloecker H."/>
            <person name="Brandt P."/>
            <person name="Chakraborty T."/>
            <person name="Charbit A."/>
            <person name="Chetouani F."/>
            <person name="Couve E."/>
            <person name="de Daruvar A."/>
            <person name="Dehoux P."/>
            <person name="Domann E."/>
            <person name="Dominguez-Bernal G."/>
            <person name="Duchaud E."/>
            <person name="Durant L."/>
            <person name="Dussurget O."/>
            <person name="Entian K.-D."/>
            <person name="Fsihi H."/>
            <person name="Garcia-del Portillo F."/>
            <person name="Garrido P."/>
            <person name="Gautier L."/>
            <person name="Goebel W."/>
            <person name="Gomez-Lopez N."/>
            <person name="Hain T."/>
            <person name="Hauf J."/>
            <person name="Jackson D."/>
            <person name="Jones L.-M."/>
            <person name="Kaerst U."/>
            <person name="Kreft J."/>
            <person name="Kuhn M."/>
            <person name="Kunst F."/>
            <person name="Kurapkat G."/>
            <person name="Madueno E."/>
            <person name="Maitournam A."/>
            <person name="Mata Vicente J."/>
            <person name="Ng E."/>
            <person name="Nedjari H."/>
            <person name="Nordsiek G."/>
            <person name="Novella S."/>
            <person name="de Pablos B."/>
            <person name="Perez-Diaz J.-C."/>
            <person name="Purcell R."/>
            <person name="Remmel B."/>
            <person name="Rose M."/>
            <person name="Schlueter T."/>
            <person name="Simoes N."/>
            <person name="Tierrez A."/>
            <person name="Vazquez-Boland J.-A."/>
            <person name="Voss H."/>
            <person name="Wehland J."/>
            <person name="Cossart P."/>
        </authorList>
    </citation>
    <scope>NUCLEOTIDE SEQUENCE [LARGE SCALE GENOMIC DNA]</scope>
    <source>
        <strain>ATCC BAA-679 / EGD-e</strain>
    </source>
</reference>
<comment type="function">
    <text evidence="1">Catalyzes the phosphorylation of the hydroxyl group of 4-methyl-5-beta-hydroxyethylthiazole (THZ).</text>
</comment>
<comment type="catalytic activity">
    <reaction evidence="1">
        <text>5-(2-hydroxyethyl)-4-methylthiazole + ATP = 4-methyl-5-(2-phosphooxyethyl)-thiazole + ADP + H(+)</text>
        <dbReference type="Rhea" id="RHEA:24212"/>
        <dbReference type="ChEBI" id="CHEBI:15378"/>
        <dbReference type="ChEBI" id="CHEBI:17957"/>
        <dbReference type="ChEBI" id="CHEBI:30616"/>
        <dbReference type="ChEBI" id="CHEBI:58296"/>
        <dbReference type="ChEBI" id="CHEBI:456216"/>
        <dbReference type="EC" id="2.7.1.50"/>
    </reaction>
</comment>
<comment type="cofactor">
    <cofactor evidence="1">
        <name>Mg(2+)</name>
        <dbReference type="ChEBI" id="CHEBI:18420"/>
    </cofactor>
</comment>
<comment type="pathway">
    <text evidence="1">Cofactor biosynthesis; thiamine diphosphate biosynthesis; 4-methyl-5-(2-phosphoethyl)-thiazole from 5-(2-hydroxyethyl)-4-methylthiazole: step 1/1.</text>
</comment>
<comment type="similarity">
    <text evidence="1">Belongs to the Thz kinase family.</text>
</comment>
<proteinExistence type="inferred from homology"/>
<dbReference type="EC" id="2.7.1.50" evidence="1"/>
<dbReference type="EMBL" id="AL591974">
    <property type="protein sequence ID" value="CAD00843.1"/>
    <property type="molecule type" value="Genomic_DNA"/>
</dbReference>
<dbReference type="PIR" id="AE1114">
    <property type="entry name" value="AE1114"/>
</dbReference>
<dbReference type="RefSeq" id="NP_463846.1">
    <property type="nucleotide sequence ID" value="NC_003210.1"/>
</dbReference>
<dbReference type="RefSeq" id="WP_010989417.1">
    <property type="nucleotide sequence ID" value="NZ_CP149495.1"/>
</dbReference>
<dbReference type="SMR" id="Q8YA46"/>
<dbReference type="STRING" id="169963.gene:17592967"/>
<dbReference type="PaxDb" id="169963-lmo0316"/>
<dbReference type="EnsemblBacteria" id="CAD00843">
    <property type="protein sequence ID" value="CAD00843"/>
    <property type="gene ID" value="CAD00843"/>
</dbReference>
<dbReference type="GeneID" id="987532"/>
<dbReference type="KEGG" id="lmo:lmo0316"/>
<dbReference type="PATRIC" id="fig|169963.11.peg.325"/>
<dbReference type="eggNOG" id="COG2145">
    <property type="taxonomic scope" value="Bacteria"/>
</dbReference>
<dbReference type="HOGENOM" id="CLU_019943_0_0_9"/>
<dbReference type="OrthoDB" id="9778146at2"/>
<dbReference type="PhylomeDB" id="Q8YA46"/>
<dbReference type="BioCyc" id="LMON169963:LMO0316-MONOMER"/>
<dbReference type="UniPathway" id="UPA00060">
    <property type="reaction ID" value="UER00139"/>
</dbReference>
<dbReference type="Proteomes" id="UP000000817">
    <property type="component" value="Chromosome"/>
</dbReference>
<dbReference type="GO" id="GO:0005524">
    <property type="term" value="F:ATP binding"/>
    <property type="evidence" value="ECO:0007669"/>
    <property type="project" value="UniProtKB-UniRule"/>
</dbReference>
<dbReference type="GO" id="GO:0004417">
    <property type="term" value="F:hydroxyethylthiazole kinase activity"/>
    <property type="evidence" value="ECO:0007669"/>
    <property type="project" value="UniProtKB-UniRule"/>
</dbReference>
<dbReference type="GO" id="GO:0000287">
    <property type="term" value="F:magnesium ion binding"/>
    <property type="evidence" value="ECO:0007669"/>
    <property type="project" value="UniProtKB-UniRule"/>
</dbReference>
<dbReference type="GO" id="GO:0009228">
    <property type="term" value="P:thiamine biosynthetic process"/>
    <property type="evidence" value="ECO:0007669"/>
    <property type="project" value="UniProtKB-KW"/>
</dbReference>
<dbReference type="GO" id="GO:0009229">
    <property type="term" value="P:thiamine diphosphate biosynthetic process"/>
    <property type="evidence" value="ECO:0007669"/>
    <property type="project" value="UniProtKB-UniRule"/>
</dbReference>
<dbReference type="CDD" id="cd01170">
    <property type="entry name" value="THZ_kinase"/>
    <property type="match status" value="1"/>
</dbReference>
<dbReference type="Gene3D" id="3.40.1190.20">
    <property type="match status" value="1"/>
</dbReference>
<dbReference type="HAMAP" id="MF_00228">
    <property type="entry name" value="Thz_kinase"/>
    <property type="match status" value="1"/>
</dbReference>
<dbReference type="InterPro" id="IPR000417">
    <property type="entry name" value="Hyethyz_kinase"/>
</dbReference>
<dbReference type="InterPro" id="IPR029056">
    <property type="entry name" value="Ribokinase-like"/>
</dbReference>
<dbReference type="NCBIfam" id="NF006830">
    <property type="entry name" value="PRK09355.1"/>
    <property type="match status" value="1"/>
</dbReference>
<dbReference type="NCBIfam" id="TIGR00694">
    <property type="entry name" value="thiM"/>
    <property type="match status" value="1"/>
</dbReference>
<dbReference type="Pfam" id="PF02110">
    <property type="entry name" value="HK"/>
    <property type="match status" value="1"/>
</dbReference>
<dbReference type="PIRSF" id="PIRSF000513">
    <property type="entry name" value="Thz_kinase"/>
    <property type="match status" value="1"/>
</dbReference>
<dbReference type="PRINTS" id="PR01099">
    <property type="entry name" value="HYETHTZKNASE"/>
</dbReference>
<dbReference type="SUPFAM" id="SSF53613">
    <property type="entry name" value="Ribokinase-like"/>
    <property type="match status" value="1"/>
</dbReference>
<sequence length="269" mass="28052">MFDFMTLEKVREKGPLVHNITNIVVANDSANGLLAIGASPIMASAKEEMDELAKMADVLVINIGTLDGELVTAMKIAGRAANVAGTPVVLDPVGVGATSYRRKVVQELLAEIQFAAIRGNAGELAAIAGEAWEAKGVDAGVGSADVLSIAGKVANEWSTVVIISGEVDVISDGTRFAKVANGSALLPRITGSGCLLSAVCGSFIAVQDDAFRASVEACASYAVASEYAEMELERKLPGSFRPLFLDALASWSVEKTRAKAKIQESGEHK</sequence>
<evidence type="ECO:0000255" key="1">
    <source>
        <dbReference type="HAMAP-Rule" id="MF_00228"/>
    </source>
</evidence>
<keyword id="KW-0067">ATP-binding</keyword>
<keyword id="KW-0418">Kinase</keyword>
<keyword id="KW-0460">Magnesium</keyword>
<keyword id="KW-0479">Metal-binding</keyword>
<keyword id="KW-0547">Nucleotide-binding</keyword>
<keyword id="KW-1185">Reference proteome</keyword>
<keyword id="KW-0784">Thiamine biosynthesis</keyword>
<keyword id="KW-0808">Transferase</keyword>
<gene>
    <name evidence="1" type="primary">thiM</name>
    <name type="ordered locus">lmo0316</name>
</gene>
<accession>Q8YA46</accession>
<organism>
    <name type="scientific">Listeria monocytogenes serovar 1/2a (strain ATCC BAA-679 / EGD-e)</name>
    <dbReference type="NCBI Taxonomy" id="169963"/>
    <lineage>
        <taxon>Bacteria</taxon>
        <taxon>Bacillati</taxon>
        <taxon>Bacillota</taxon>
        <taxon>Bacilli</taxon>
        <taxon>Bacillales</taxon>
        <taxon>Listeriaceae</taxon>
        <taxon>Listeria</taxon>
    </lineage>
</organism>
<feature type="chain" id="PRO_0000156945" description="Hydroxyethylthiazole kinase">
    <location>
        <begin position="1"/>
        <end position="269"/>
    </location>
</feature>
<feature type="binding site" evidence="1">
    <location>
        <position position="42"/>
    </location>
    <ligand>
        <name>substrate</name>
    </ligand>
</feature>
<feature type="binding site" evidence="1">
    <location>
        <position position="118"/>
    </location>
    <ligand>
        <name>ATP</name>
        <dbReference type="ChEBI" id="CHEBI:30616"/>
    </ligand>
</feature>
<feature type="binding site" evidence="1">
    <location>
        <position position="164"/>
    </location>
    <ligand>
        <name>ATP</name>
        <dbReference type="ChEBI" id="CHEBI:30616"/>
    </ligand>
</feature>
<feature type="binding site" evidence="1">
    <location>
        <position position="191"/>
    </location>
    <ligand>
        <name>substrate</name>
    </ligand>
</feature>
<name>THIM_LISMO</name>
<protein>
    <recommendedName>
        <fullName evidence="1">Hydroxyethylthiazole kinase</fullName>
        <ecNumber evidence="1">2.7.1.50</ecNumber>
    </recommendedName>
    <alternativeName>
        <fullName evidence="1">4-methyl-5-beta-hydroxyethylthiazole kinase</fullName>
        <shortName evidence="1">TH kinase</shortName>
        <shortName evidence="1">Thz kinase</shortName>
    </alternativeName>
</protein>